<comment type="function">
    <text evidence="1">Acts as a chaperone.</text>
</comment>
<comment type="induction">
    <text evidence="1">By stress conditions e.g. heat shock.</text>
</comment>
<comment type="similarity">
    <text evidence="1">Belongs to the heat shock protein 70 family.</text>
</comment>
<feature type="chain" id="PRO_1000133129" description="Chaperone protein DnaK">
    <location>
        <begin position="1"/>
        <end position="611"/>
    </location>
</feature>
<feature type="region of interest" description="Disordered" evidence="2">
    <location>
        <begin position="577"/>
        <end position="598"/>
    </location>
</feature>
<feature type="compositionally biased region" description="Low complexity" evidence="2">
    <location>
        <begin position="577"/>
        <end position="592"/>
    </location>
</feature>
<feature type="modified residue" description="Phosphothreonine; by autocatalysis" evidence="1">
    <location>
        <position position="173"/>
    </location>
</feature>
<keyword id="KW-0067">ATP-binding</keyword>
<keyword id="KW-0143">Chaperone</keyword>
<keyword id="KW-0547">Nucleotide-binding</keyword>
<keyword id="KW-0597">Phosphoprotein</keyword>
<keyword id="KW-0346">Stress response</keyword>
<name>DNAK_BACAC</name>
<evidence type="ECO:0000255" key="1">
    <source>
        <dbReference type="HAMAP-Rule" id="MF_00332"/>
    </source>
</evidence>
<evidence type="ECO:0000256" key="2">
    <source>
        <dbReference type="SAM" id="MobiDB-lite"/>
    </source>
</evidence>
<dbReference type="EMBL" id="CP001215">
    <property type="protein sequence ID" value="ACP12992.1"/>
    <property type="molecule type" value="Genomic_DNA"/>
</dbReference>
<dbReference type="RefSeq" id="WP_000034699.1">
    <property type="nucleotide sequence ID" value="NC_012581.1"/>
</dbReference>
<dbReference type="SMR" id="C3L5R7"/>
<dbReference type="GeneID" id="45024191"/>
<dbReference type="KEGG" id="bah:BAMEG_4576"/>
<dbReference type="HOGENOM" id="CLU_005965_2_4_9"/>
<dbReference type="GO" id="GO:0005524">
    <property type="term" value="F:ATP binding"/>
    <property type="evidence" value="ECO:0007669"/>
    <property type="project" value="UniProtKB-UniRule"/>
</dbReference>
<dbReference type="GO" id="GO:0140662">
    <property type="term" value="F:ATP-dependent protein folding chaperone"/>
    <property type="evidence" value="ECO:0007669"/>
    <property type="project" value="InterPro"/>
</dbReference>
<dbReference type="GO" id="GO:0051082">
    <property type="term" value="F:unfolded protein binding"/>
    <property type="evidence" value="ECO:0007669"/>
    <property type="project" value="InterPro"/>
</dbReference>
<dbReference type="CDD" id="cd10234">
    <property type="entry name" value="ASKHA_NBD_HSP70_DnaK-like"/>
    <property type="match status" value="1"/>
</dbReference>
<dbReference type="FunFam" id="2.60.34.10:FF:000014">
    <property type="entry name" value="Chaperone protein DnaK HSP70"/>
    <property type="match status" value="1"/>
</dbReference>
<dbReference type="FunFam" id="1.20.1270.10:FF:000004">
    <property type="entry name" value="Molecular chaperone DnaK"/>
    <property type="match status" value="1"/>
</dbReference>
<dbReference type="FunFam" id="3.30.420.40:FF:000071">
    <property type="entry name" value="Molecular chaperone DnaK"/>
    <property type="match status" value="1"/>
</dbReference>
<dbReference type="FunFam" id="3.90.640.10:FF:000003">
    <property type="entry name" value="Molecular chaperone DnaK"/>
    <property type="match status" value="1"/>
</dbReference>
<dbReference type="Gene3D" id="1.20.1270.10">
    <property type="match status" value="1"/>
</dbReference>
<dbReference type="Gene3D" id="3.30.420.40">
    <property type="match status" value="2"/>
</dbReference>
<dbReference type="Gene3D" id="3.90.640.10">
    <property type="entry name" value="Actin, Chain A, domain 4"/>
    <property type="match status" value="1"/>
</dbReference>
<dbReference type="Gene3D" id="2.60.34.10">
    <property type="entry name" value="Substrate Binding Domain Of DNAk, Chain A, domain 1"/>
    <property type="match status" value="1"/>
</dbReference>
<dbReference type="HAMAP" id="MF_00332">
    <property type="entry name" value="DnaK"/>
    <property type="match status" value="1"/>
</dbReference>
<dbReference type="InterPro" id="IPR043129">
    <property type="entry name" value="ATPase_NBD"/>
</dbReference>
<dbReference type="InterPro" id="IPR012725">
    <property type="entry name" value="Chaperone_DnaK"/>
</dbReference>
<dbReference type="InterPro" id="IPR018181">
    <property type="entry name" value="Heat_shock_70_CS"/>
</dbReference>
<dbReference type="InterPro" id="IPR029048">
    <property type="entry name" value="HSP70_C_sf"/>
</dbReference>
<dbReference type="InterPro" id="IPR029047">
    <property type="entry name" value="HSP70_peptide-bd_sf"/>
</dbReference>
<dbReference type="InterPro" id="IPR013126">
    <property type="entry name" value="Hsp_70_fam"/>
</dbReference>
<dbReference type="NCBIfam" id="NF001413">
    <property type="entry name" value="PRK00290.1"/>
    <property type="match status" value="1"/>
</dbReference>
<dbReference type="NCBIfam" id="TIGR02350">
    <property type="entry name" value="prok_dnaK"/>
    <property type="match status" value="1"/>
</dbReference>
<dbReference type="PANTHER" id="PTHR19375">
    <property type="entry name" value="HEAT SHOCK PROTEIN 70KDA"/>
    <property type="match status" value="1"/>
</dbReference>
<dbReference type="Pfam" id="PF00012">
    <property type="entry name" value="HSP70"/>
    <property type="match status" value="1"/>
</dbReference>
<dbReference type="PRINTS" id="PR00301">
    <property type="entry name" value="HEATSHOCK70"/>
</dbReference>
<dbReference type="SUPFAM" id="SSF53067">
    <property type="entry name" value="Actin-like ATPase domain"/>
    <property type="match status" value="2"/>
</dbReference>
<dbReference type="SUPFAM" id="SSF100934">
    <property type="entry name" value="Heat shock protein 70kD (HSP70), C-terminal subdomain"/>
    <property type="match status" value="1"/>
</dbReference>
<dbReference type="SUPFAM" id="SSF100920">
    <property type="entry name" value="Heat shock protein 70kD (HSP70), peptide-binding domain"/>
    <property type="match status" value="1"/>
</dbReference>
<dbReference type="PROSITE" id="PS00297">
    <property type="entry name" value="HSP70_1"/>
    <property type="match status" value="1"/>
</dbReference>
<dbReference type="PROSITE" id="PS00329">
    <property type="entry name" value="HSP70_2"/>
    <property type="match status" value="1"/>
</dbReference>
<dbReference type="PROSITE" id="PS01036">
    <property type="entry name" value="HSP70_3"/>
    <property type="match status" value="1"/>
</dbReference>
<accession>C3L5R7</accession>
<gene>
    <name evidence="1" type="primary">dnaK</name>
    <name type="ordered locus">BAMEG_4576</name>
</gene>
<sequence>MSKIIGIDLGTTNSCVAVMEGGEPKVIPNPEGNRTTPSVVAFKNEERQVGEVAKRQAITNPNTIMSVKRHMGTDYKVEVEGKDYTPQEISAIILQNLKASAEAYLGETVTKAVITVPAYFNDAERQATKDAGRIAGLEVERIINEPTAAALAYGLEKQDEEQKILVYDLGGGTFDVSILELADGTFEVISTAGDNRLGGDDFDQVIIDHLVAEFKKENNIDLSQDKMALQRLKDAAEKAKKDLSGVTQTQISLPFISAGAAGPLHLELTLTRAKFEELSAGLVERTLEPTRRALKDAGFAPSELDKVILVGGSTRIPAVQEAIKRETGKEPYKGVNPDEVVALGAAVQGGVLTGDVEGVLLLDVTPLSLGIETMGGVFTKLIERNTTIPTSKSQVFSTAADNQPAVDIHVLQGERPMSADNKTLGRFQLTDLPPAPRGIPQIEVTFDIDANGIVNVRAKDLGTSKEQAITIQSSSGLSDEEVERMVQEAEANADADQKRKEEVELRNEADQLVFQTDKVVKDLEGKVDAAEVAKATEAKEALQAAIEKNELEEIRAKKDALQEIVQQLTVKLYEQAQAAAGQAEGAEGAQDAGAKKDNVVDAEFEEVKEDK</sequence>
<protein>
    <recommendedName>
        <fullName evidence="1">Chaperone protein DnaK</fullName>
    </recommendedName>
    <alternativeName>
        <fullName evidence="1">HSP70</fullName>
    </alternativeName>
    <alternativeName>
        <fullName evidence="1">Heat shock 70 kDa protein</fullName>
    </alternativeName>
    <alternativeName>
        <fullName evidence="1">Heat shock protein 70</fullName>
    </alternativeName>
</protein>
<reference key="1">
    <citation type="submission" date="2008-10" db="EMBL/GenBank/DDBJ databases">
        <title>Genome sequence of Bacillus anthracis str. CDC 684.</title>
        <authorList>
            <person name="Dodson R.J."/>
            <person name="Munk A.C."/>
            <person name="Brettin T."/>
            <person name="Bruce D."/>
            <person name="Detter C."/>
            <person name="Tapia R."/>
            <person name="Han C."/>
            <person name="Sutton G."/>
            <person name="Sims D."/>
        </authorList>
    </citation>
    <scope>NUCLEOTIDE SEQUENCE [LARGE SCALE GENOMIC DNA]</scope>
    <source>
        <strain>CDC 684 / NRRL 3495</strain>
    </source>
</reference>
<proteinExistence type="inferred from homology"/>
<organism>
    <name type="scientific">Bacillus anthracis (strain CDC 684 / NRRL 3495)</name>
    <dbReference type="NCBI Taxonomy" id="568206"/>
    <lineage>
        <taxon>Bacteria</taxon>
        <taxon>Bacillati</taxon>
        <taxon>Bacillota</taxon>
        <taxon>Bacilli</taxon>
        <taxon>Bacillales</taxon>
        <taxon>Bacillaceae</taxon>
        <taxon>Bacillus</taxon>
        <taxon>Bacillus cereus group</taxon>
    </lineage>
</organism>